<protein>
    <recommendedName>
        <fullName evidence="1">Signal recognition particle protein</fullName>
        <ecNumber evidence="1">3.6.5.4</ecNumber>
    </recommendedName>
    <alternativeName>
        <fullName evidence="1">Fifty-four homolog</fullName>
    </alternativeName>
</protein>
<reference key="1">
    <citation type="journal article" date="1999" name="Nature">
        <title>Genomic sequence comparison of two unrelated isolates of the human gastric pathogen Helicobacter pylori.</title>
        <authorList>
            <person name="Alm R.A."/>
            <person name="Ling L.-S.L."/>
            <person name="Moir D.T."/>
            <person name="King B.L."/>
            <person name="Brown E.D."/>
            <person name="Doig P.C."/>
            <person name="Smith D.R."/>
            <person name="Noonan B."/>
            <person name="Guild B.C."/>
            <person name="deJonge B.L."/>
            <person name="Carmel G."/>
            <person name="Tummino P.J."/>
            <person name="Caruso A."/>
            <person name="Uria-Nickelsen M."/>
            <person name="Mills D.M."/>
            <person name="Ives C."/>
            <person name="Gibson R."/>
            <person name="Merberg D."/>
            <person name="Mills S.D."/>
            <person name="Jiang Q."/>
            <person name="Taylor D.E."/>
            <person name="Vovis G.F."/>
            <person name="Trust T.J."/>
        </authorList>
    </citation>
    <scope>NUCLEOTIDE SEQUENCE [LARGE SCALE GENOMIC DNA]</scope>
    <source>
        <strain>J99 / ATCC 700824</strain>
    </source>
</reference>
<proteinExistence type="inferred from homology"/>
<evidence type="ECO:0000255" key="1">
    <source>
        <dbReference type="HAMAP-Rule" id="MF_00306"/>
    </source>
</evidence>
<comment type="function">
    <text evidence="1">Involved in targeting and insertion of nascent membrane proteins into the cytoplasmic membrane. Binds to the hydrophobic signal sequence of the ribosome-nascent chain (RNC) as it emerges from the ribosomes. The SRP-RNC complex is then targeted to the cytoplasmic membrane where it interacts with the SRP receptor FtsY. Interaction with FtsY leads to the transfer of the RNC complex to the Sec translocase for insertion into the membrane, the hydrolysis of GTP by both Ffh and FtsY, and the dissociation of the SRP-FtsY complex into the individual components.</text>
</comment>
<comment type="catalytic activity">
    <reaction evidence="1">
        <text>GTP + H2O = GDP + phosphate + H(+)</text>
        <dbReference type="Rhea" id="RHEA:19669"/>
        <dbReference type="ChEBI" id="CHEBI:15377"/>
        <dbReference type="ChEBI" id="CHEBI:15378"/>
        <dbReference type="ChEBI" id="CHEBI:37565"/>
        <dbReference type="ChEBI" id="CHEBI:43474"/>
        <dbReference type="ChEBI" id="CHEBI:58189"/>
        <dbReference type="EC" id="3.6.5.4"/>
    </reaction>
</comment>
<comment type="subunit">
    <text evidence="1">Part of the signal recognition particle protein translocation system, which is composed of SRP and FtsY. SRP is a ribonucleoprotein composed of Ffh and a 4.5S RNA molecule.</text>
</comment>
<comment type="subcellular location">
    <subcellularLocation>
        <location evidence="1">Cytoplasm</location>
    </subcellularLocation>
    <text evidence="1">The SRP-RNC complex is targeted to the cytoplasmic membrane.</text>
</comment>
<comment type="domain">
    <text evidence="1">Composed of three domains: the N-terminal N domain, which is responsible for interactions with the ribosome, the central G domain, which binds GTP, and the C-terminal M domain, which binds the RNA and the signal sequence of the RNC.</text>
</comment>
<comment type="similarity">
    <text evidence="1">Belongs to the GTP-binding SRP family. SRP54 subfamily.</text>
</comment>
<gene>
    <name evidence="1" type="primary">ffh</name>
    <name type="ordered locus">jhp_1079</name>
</gene>
<accession>Q9ZK62</accession>
<dbReference type="EC" id="3.6.5.4" evidence="1"/>
<dbReference type="EMBL" id="AE001439">
    <property type="protein sequence ID" value="AAD06659.1"/>
    <property type="molecule type" value="Genomic_DNA"/>
</dbReference>
<dbReference type="PIR" id="D71852">
    <property type="entry name" value="D71852"/>
</dbReference>
<dbReference type="RefSeq" id="WP_000484709.1">
    <property type="nucleotide sequence ID" value="NC_000921.1"/>
</dbReference>
<dbReference type="SMR" id="Q9ZK62"/>
<dbReference type="KEGG" id="hpj:jhp_1079"/>
<dbReference type="PATRIC" id="fig|85963.30.peg.1504"/>
<dbReference type="eggNOG" id="COG0541">
    <property type="taxonomic scope" value="Bacteria"/>
</dbReference>
<dbReference type="Proteomes" id="UP000000804">
    <property type="component" value="Chromosome"/>
</dbReference>
<dbReference type="GO" id="GO:0048500">
    <property type="term" value="C:signal recognition particle"/>
    <property type="evidence" value="ECO:0007669"/>
    <property type="project" value="UniProtKB-UniRule"/>
</dbReference>
<dbReference type="GO" id="GO:0008312">
    <property type="term" value="F:7S RNA binding"/>
    <property type="evidence" value="ECO:0007669"/>
    <property type="project" value="InterPro"/>
</dbReference>
<dbReference type="GO" id="GO:0016887">
    <property type="term" value="F:ATP hydrolysis activity"/>
    <property type="evidence" value="ECO:0007669"/>
    <property type="project" value="InterPro"/>
</dbReference>
<dbReference type="GO" id="GO:0005525">
    <property type="term" value="F:GTP binding"/>
    <property type="evidence" value="ECO:0007669"/>
    <property type="project" value="UniProtKB-UniRule"/>
</dbReference>
<dbReference type="GO" id="GO:0003924">
    <property type="term" value="F:GTPase activity"/>
    <property type="evidence" value="ECO:0007669"/>
    <property type="project" value="UniProtKB-UniRule"/>
</dbReference>
<dbReference type="GO" id="GO:0006614">
    <property type="term" value="P:SRP-dependent cotranslational protein targeting to membrane"/>
    <property type="evidence" value="ECO:0007669"/>
    <property type="project" value="InterPro"/>
</dbReference>
<dbReference type="CDD" id="cd18539">
    <property type="entry name" value="SRP_G"/>
    <property type="match status" value="1"/>
</dbReference>
<dbReference type="Gene3D" id="3.40.50.300">
    <property type="entry name" value="P-loop containing nucleotide triphosphate hydrolases"/>
    <property type="match status" value="1"/>
</dbReference>
<dbReference type="Gene3D" id="1.20.120.140">
    <property type="entry name" value="Signal recognition particle SRP54, nucleotide-binding domain"/>
    <property type="match status" value="1"/>
</dbReference>
<dbReference type="Gene3D" id="1.10.260.30">
    <property type="entry name" value="Signal recognition particle, SRP54 subunit, M-domain"/>
    <property type="match status" value="1"/>
</dbReference>
<dbReference type="HAMAP" id="MF_00306">
    <property type="entry name" value="SRP54"/>
    <property type="match status" value="1"/>
</dbReference>
<dbReference type="InterPro" id="IPR003593">
    <property type="entry name" value="AAA+_ATPase"/>
</dbReference>
<dbReference type="InterPro" id="IPR027417">
    <property type="entry name" value="P-loop_NTPase"/>
</dbReference>
<dbReference type="InterPro" id="IPR036891">
    <property type="entry name" value="Signal_recog_part_SRP54_M_sf"/>
</dbReference>
<dbReference type="InterPro" id="IPR013822">
    <property type="entry name" value="Signal_recog_particl_SRP54_hlx"/>
</dbReference>
<dbReference type="InterPro" id="IPR004125">
    <property type="entry name" value="Signal_recog_particle_SRP54_M"/>
</dbReference>
<dbReference type="InterPro" id="IPR004780">
    <property type="entry name" value="SRP"/>
</dbReference>
<dbReference type="InterPro" id="IPR036225">
    <property type="entry name" value="SRP/SRP_N"/>
</dbReference>
<dbReference type="InterPro" id="IPR022941">
    <property type="entry name" value="SRP54"/>
</dbReference>
<dbReference type="InterPro" id="IPR000897">
    <property type="entry name" value="SRP54_GTPase_dom"/>
</dbReference>
<dbReference type="InterPro" id="IPR042101">
    <property type="entry name" value="SRP54_N_sf"/>
</dbReference>
<dbReference type="NCBIfam" id="TIGR00959">
    <property type="entry name" value="ffh"/>
    <property type="match status" value="1"/>
</dbReference>
<dbReference type="PANTHER" id="PTHR11564">
    <property type="entry name" value="SIGNAL RECOGNITION PARTICLE 54K PROTEIN SRP54"/>
    <property type="match status" value="1"/>
</dbReference>
<dbReference type="PANTHER" id="PTHR11564:SF5">
    <property type="entry name" value="SIGNAL RECOGNITION PARTICLE SUBUNIT SRP54"/>
    <property type="match status" value="1"/>
</dbReference>
<dbReference type="Pfam" id="PF00448">
    <property type="entry name" value="SRP54"/>
    <property type="match status" value="1"/>
</dbReference>
<dbReference type="Pfam" id="PF02881">
    <property type="entry name" value="SRP54_N"/>
    <property type="match status" value="1"/>
</dbReference>
<dbReference type="Pfam" id="PF02978">
    <property type="entry name" value="SRP_SPB"/>
    <property type="match status" value="1"/>
</dbReference>
<dbReference type="SMART" id="SM00382">
    <property type="entry name" value="AAA"/>
    <property type="match status" value="1"/>
</dbReference>
<dbReference type="SMART" id="SM00962">
    <property type="entry name" value="SRP54"/>
    <property type="match status" value="1"/>
</dbReference>
<dbReference type="SMART" id="SM00963">
    <property type="entry name" value="SRP54_N"/>
    <property type="match status" value="1"/>
</dbReference>
<dbReference type="SUPFAM" id="SSF47364">
    <property type="entry name" value="Domain of the SRP/SRP receptor G-proteins"/>
    <property type="match status" value="1"/>
</dbReference>
<dbReference type="SUPFAM" id="SSF52540">
    <property type="entry name" value="P-loop containing nucleoside triphosphate hydrolases"/>
    <property type="match status" value="1"/>
</dbReference>
<dbReference type="SUPFAM" id="SSF47446">
    <property type="entry name" value="Signal peptide-binding domain"/>
    <property type="match status" value="1"/>
</dbReference>
<dbReference type="PROSITE" id="PS00300">
    <property type="entry name" value="SRP54"/>
    <property type="match status" value="1"/>
</dbReference>
<sequence>MFQALSDGFKNALNKIRFQDDEKALDRALDELKKTLLKNDVHHKVARELLKKVESQTKAGGIGKQQFLDALEKSLLEILSAKGSSGFTFAQTPPTVVLMAGLQGSGKTTTTAKLAHYLKTKNKKVLLCACDLQRLAAVEQLKVLGEQVGVEVFHEENKSVKEIANNALKRAKEAQFDVLIVDSAGRLAIDKELMQELKEVKEVLNPHEVLYVADALSGQDGVKSANTFNEEIGVSGVVLSKFDSDSKGGIALGITYQLGLPLRFIGSGEKIPDLDVFMPERIVGRLMGAGDIISLAEKTASVLNPNEAKDLSKKLKKGQFTFNDFLNQIEKVKKLGSMSSLISMIPGLGNMASALKDTDLESSLEVKKIKAMVNSMTKKERENPEILNGSRRKRIALGSGLEVSEINRIIKRFDQASKMAKRLTNKKGISDLMNLMSQAKNQTPPKMR</sequence>
<feature type="chain" id="PRO_0000101158" description="Signal recognition particle protein">
    <location>
        <begin position="1"/>
        <end position="448"/>
    </location>
</feature>
<feature type="binding site" evidence="1">
    <location>
        <begin position="101"/>
        <end position="108"/>
    </location>
    <ligand>
        <name>GTP</name>
        <dbReference type="ChEBI" id="CHEBI:37565"/>
    </ligand>
</feature>
<feature type="binding site" evidence="1">
    <location>
        <begin position="182"/>
        <end position="186"/>
    </location>
    <ligand>
        <name>GTP</name>
        <dbReference type="ChEBI" id="CHEBI:37565"/>
    </ligand>
</feature>
<feature type="binding site" evidence="1">
    <location>
        <begin position="240"/>
        <end position="243"/>
    </location>
    <ligand>
        <name>GTP</name>
        <dbReference type="ChEBI" id="CHEBI:37565"/>
    </ligand>
</feature>
<keyword id="KW-0963">Cytoplasm</keyword>
<keyword id="KW-0342">GTP-binding</keyword>
<keyword id="KW-0378">Hydrolase</keyword>
<keyword id="KW-0547">Nucleotide-binding</keyword>
<keyword id="KW-0687">Ribonucleoprotein</keyword>
<keyword id="KW-0694">RNA-binding</keyword>
<keyword id="KW-0733">Signal recognition particle</keyword>
<name>SRP54_HELPJ</name>
<organism>
    <name type="scientific">Helicobacter pylori (strain J99 / ATCC 700824)</name>
    <name type="common">Campylobacter pylori J99</name>
    <dbReference type="NCBI Taxonomy" id="85963"/>
    <lineage>
        <taxon>Bacteria</taxon>
        <taxon>Pseudomonadati</taxon>
        <taxon>Campylobacterota</taxon>
        <taxon>Epsilonproteobacteria</taxon>
        <taxon>Campylobacterales</taxon>
        <taxon>Helicobacteraceae</taxon>
        <taxon>Helicobacter</taxon>
    </lineage>
</organism>